<proteinExistence type="inferred from homology"/>
<reference key="1">
    <citation type="journal article" date="2006" name="Proc. Natl. Acad. Sci. U.S.A.">
        <title>The partitioned Rhizobium etli genome: genetic and metabolic redundancy in seven interacting replicons.</title>
        <authorList>
            <person name="Gonzalez V."/>
            <person name="Santamaria R.I."/>
            <person name="Bustos P."/>
            <person name="Hernandez-Gonzalez I."/>
            <person name="Medrano-Soto A."/>
            <person name="Moreno-Hagelsieb G."/>
            <person name="Janga S.C."/>
            <person name="Ramirez M.A."/>
            <person name="Jimenez-Jacinto V."/>
            <person name="Collado-Vides J."/>
            <person name="Davila G."/>
        </authorList>
    </citation>
    <scope>NUCLEOTIDE SEQUENCE [LARGE SCALE GENOMIC DNA]</scope>
    <source>
        <strain>ATCC 51251 / DSM 11541 / JCM 21823 / NBRC 15573 / CFN 42</strain>
    </source>
</reference>
<comment type="function">
    <text evidence="1">Could be involved in insertion of integral membrane proteins into the membrane.</text>
</comment>
<comment type="subcellular location">
    <subcellularLocation>
        <location evidence="1">Cell inner membrane</location>
        <topology evidence="1">Peripheral membrane protein</topology>
        <orientation evidence="1">Cytoplasmic side</orientation>
    </subcellularLocation>
</comment>
<comment type="similarity">
    <text evidence="1">Belongs to the UPF0161 family.</text>
</comment>
<sequence>MCEFCVRQADDEDDGGAAASGRPNARTARYSRNYAGPFRKTPDRLLGMGLIRLYQLTLSGFVGNSCRHIPTCSEYGYEAIARHGLWAGGWMTLFRVARCGPGGTSGLDPVPEILSDGFRWWTPRRYLSLGRKRG</sequence>
<feature type="chain" id="PRO_0000253151" description="Putative membrane protein insertion efficiency factor">
    <location>
        <begin position="1"/>
        <end position="134"/>
    </location>
</feature>
<keyword id="KW-0997">Cell inner membrane</keyword>
<keyword id="KW-1003">Cell membrane</keyword>
<keyword id="KW-0472">Membrane</keyword>
<keyword id="KW-1185">Reference proteome</keyword>
<dbReference type="EMBL" id="CP000133">
    <property type="protein sequence ID" value="ABC90980.1"/>
    <property type="molecule type" value="Genomic_DNA"/>
</dbReference>
<dbReference type="RefSeq" id="WP_011425461.1">
    <property type="nucleotide sequence ID" value="NC_007761.1"/>
</dbReference>
<dbReference type="KEGG" id="ret:RHE_CH02199"/>
<dbReference type="eggNOG" id="COG0759">
    <property type="taxonomic scope" value="Bacteria"/>
</dbReference>
<dbReference type="HOGENOM" id="CLU_144811_0_1_5"/>
<dbReference type="OrthoDB" id="9801753at2"/>
<dbReference type="Proteomes" id="UP000001936">
    <property type="component" value="Chromosome"/>
</dbReference>
<dbReference type="GO" id="GO:0005886">
    <property type="term" value="C:plasma membrane"/>
    <property type="evidence" value="ECO:0007669"/>
    <property type="project" value="UniProtKB-SubCell"/>
</dbReference>
<dbReference type="HAMAP" id="MF_00386">
    <property type="entry name" value="UPF0161_YidD"/>
    <property type="match status" value="1"/>
</dbReference>
<dbReference type="InterPro" id="IPR002696">
    <property type="entry name" value="Membr_insert_effic_factor_YidD"/>
</dbReference>
<dbReference type="NCBIfam" id="TIGR00278">
    <property type="entry name" value="membrane protein insertion efficiency factor YidD"/>
    <property type="match status" value="1"/>
</dbReference>
<dbReference type="PANTHER" id="PTHR33383">
    <property type="entry name" value="MEMBRANE PROTEIN INSERTION EFFICIENCY FACTOR-RELATED"/>
    <property type="match status" value="1"/>
</dbReference>
<dbReference type="PANTHER" id="PTHR33383:SF1">
    <property type="entry name" value="MEMBRANE PROTEIN INSERTION EFFICIENCY FACTOR-RELATED"/>
    <property type="match status" value="1"/>
</dbReference>
<dbReference type="Pfam" id="PF01809">
    <property type="entry name" value="YidD"/>
    <property type="match status" value="1"/>
</dbReference>
<dbReference type="SMART" id="SM01234">
    <property type="entry name" value="Haemolytic"/>
    <property type="match status" value="1"/>
</dbReference>
<name>YIDD_RHIEC</name>
<accession>Q2K856</accession>
<evidence type="ECO:0000255" key="1">
    <source>
        <dbReference type="HAMAP-Rule" id="MF_00386"/>
    </source>
</evidence>
<protein>
    <recommendedName>
        <fullName evidence="1">Putative membrane protein insertion efficiency factor</fullName>
    </recommendedName>
</protein>
<organism>
    <name type="scientific">Rhizobium etli (strain ATCC 51251 / DSM 11541 / JCM 21823 / NBRC 15573 / CFN 42)</name>
    <dbReference type="NCBI Taxonomy" id="347834"/>
    <lineage>
        <taxon>Bacteria</taxon>
        <taxon>Pseudomonadati</taxon>
        <taxon>Pseudomonadota</taxon>
        <taxon>Alphaproteobacteria</taxon>
        <taxon>Hyphomicrobiales</taxon>
        <taxon>Rhizobiaceae</taxon>
        <taxon>Rhizobium/Agrobacterium group</taxon>
        <taxon>Rhizobium</taxon>
    </lineage>
</organism>
<gene>
    <name type="ordered locus">RHE_CH02199</name>
</gene>